<evidence type="ECO:0000250" key="1"/>
<evidence type="ECO:0000255" key="2"/>
<evidence type="ECO:0000255" key="3">
    <source>
        <dbReference type="PROSITE-ProRule" id="PRU00448"/>
    </source>
</evidence>
<evidence type="ECO:0000269" key="4">
    <source>
    </source>
</evidence>
<evidence type="ECO:0000269" key="5">
    <source>
    </source>
</evidence>
<evidence type="ECO:0000269" key="6">
    <source>
    </source>
</evidence>
<evidence type="ECO:0000269" key="7">
    <source>
    </source>
</evidence>
<evidence type="ECO:0000269" key="8">
    <source>
    </source>
</evidence>
<evidence type="ECO:0000269" key="9">
    <source>
    </source>
</evidence>
<evidence type="ECO:0000269" key="10">
    <source>
    </source>
</evidence>
<evidence type="ECO:0000269" key="11">
    <source>
    </source>
</evidence>
<evidence type="ECO:0000269" key="12">
    <source>
    </source>
</evidence>
<evidence type="ECO:0000269" key="13">
    <source>
    </source>
</evidence>
<evidence type="ECO:0000269" key="14">
    <source>
    </source>
</evidence>
<evidence type="ECO:0000269" key="15">
    <source>
    </source>
</evidence>
<evidence type="ECO:0000305" key="16"/>
<protein>
    <recommendedName>
        <fullName>Calcineurin B-like protein 9</fullName>
    </recommendedName>
</protein>
<comment type="function">
    <text evidence="5 6 7 8 10 13">Acts as a calcium sensor involved in abscisic acid (ABA) signaling and stress-induced ABA biosynthesis pathways. Contributes to the regulation of early stress-related CBF/DREB transcription factors. CBL proteins interact with CIPK serine-threonine protein kinases. Binding of a CBL protein to the regulatory NAF domain of a CIPK protein lead to the activation of the kinase in a calcium-dependent manner. May function as a negative regulator of stress and ABA responses. Mediates the activation of AKT1 by CIPK proteins (CIPK6, CIPK16, and CIPK23) in response to low potassium conditions and in the context of stomatal movement. Involved in the calcium-dependent regulation by CIPK26 of reactive oxygen species production by the NADPH oxidase RBOHF. The CBL9/CIPK3 complex acts in the regulation of abscisic acid response in seed germination.</text>
</comment>
<comment type="subunit">
    <text evidence="1 4 6 7 8 10 12 13 15">Homodimer (By similarity). Part of a K(+)-channel calcium-sensing kinase/phosphatase complex composed by a calcium sensor CBL (CBL1, CBL2, CBL3 or CBL9), a kinase CIPK (CIPK6, CIPK16 or CIPK23), a phosphatase PP2C (AIP1) and a K(+)-channel (AKT1). Interacts with CIPK1, CIPK3, CIPK6, CIPK8, CIPK14, CIPK16, CIPK18, CIPK21, CIPK23, CIPK24 and CIPK26.</text>
</comment>
<comment type="interaction">
    <interactant intactId="EBI-637381">
        <id>Q9LTB8</id>
    </interactant>
    <interactant intactId="EBI-1748677">
        <id>Q8RWC9</id>
        <label>CIPK1</label>
    </interactant>
    <organismsDiffer>false</organismsDiffer>
    <experiments>5</experiments>
</comment>
<comment type="interaction">
    <interactant intactId="EBI-637381">
        <id>Q9LTB8</id>
    </interactant>
    <interactant intactId="EBI-537572">
        <id>Q9C562</id>
        <label>CIPK10</label>
    </interactant>
    <organismsDiffer>false</organismsDiffer>
    <experiments>9</experiments>
</comment>
<comment type="interaction">
    <interactant intactId="EBI-637381">
        <id>Q9LTB8</id>
    </interactant>
    <interactant intactId="EBI-537638">
        <id>O22932</id>
        <label>CIPK11</label>
    </interactant>
    <organismsDiffer>false</organismsDiffer>
    <experiments>5</experiments>
</comment>
<comment type="interaction">
    <interactant intactId="EBI-637381">
        <id>Q9LTB8</id>
    </interactant>
    <interactant intactId="EBI-537592">
        <id>P92937</id>
        <label>CIPK15</label>
    </interactant>
    <organismsDiffer>false</organismsDiffer>
    <experiments>3</experiments>
</comment>
<comment type="interaction">
    <interactant intactId="EBI-637381">
        <id>Q9LTB8</id>
    </interactant>
    <interactant intactId="EBI-1573415">
        <id>Q9SEZ7</id>
        <label>CIPK16</label>
    </interactant>
    <organismsDiffer>false</organismsDiffer>
    <experiments>7</experiments>
</comment>
<comment type="interaction">
    <interactant intactId="EBI-637381">
        <id>Q9LTB8</id>
    </interactant>
    <interactant intactId="EBI-25514480">
        <id>Q9FJ54</id>
        <label>CIPK20</label>
    </interactant>
    <organismsDiffer>false</organismsDiffer>
    <experiments>5</experiments>
</comment>
<comment type="interaction">
    <interactant intactId="EBI-637381">
        <id>Q9LTB8</id>
    </interactant>
    <interactant intactId="EBI-974277">
        <id>Q93VD3</id>
        <label>CIPK23</label>
    </interactant>
    <organismsDiffer>false</organismsDiffer>
    <experiments>13</experiments>
</comment>
<comment type="interaction">
    <interactant intactId="EBI-637381">
        <id>Q9LTB8</id>
    </interactant>
    <interactant intactId="EBI-537551">
        <id>Q9LDI3</id>
        <label>CIPK24</label>
    </interactant>
    <organismsDiffer>false</organismsDiffer>
    <experiments>8</experiments>
</comment>
<comment type="interaction">
    <interactant intactId="EBI-637381">
        <id>Q9LTB8</id>
    </interactant>
    <interactant intactId="EBI-1748724">
        <id>Q2V452</id>
        <label>CIPK3</label>
    </interactant>
    <organismsDiffer>false</organismsDiffer>
    <experiments>5</experiments>
</comment>
<comment type="interaction">
    <interactant intactId="EBI-637381">
        <id>Q9LTB8</id>
    </interactant>
    <interactant intactId="EBI-2026322">
        <id>Q9LEU7</id>
        <label>CIPK5</label>
    </interactant>
    <organismsDiffer>false</organismsDiffer>
    <experiments>6</experiments>
</comment>
<comment type="interaction">
    <interactant intactId="EBI-637381">
        <id>Q9LTB8</id>
    </interactant>
    <interactant intactId="EBI-2026454">
        <id>Q9STV4</id>
        <label>CIPK8</label>
    </interactant>
    <organismsDiffer>false</organismsDiffer>
    <experiments>8</experiments>
</comment>
<comment type="interaction">
    <interactant intactId="EBI-637381">
        <id>Q9LTB8</id>
    </interactant>
    <interactant intactId="EBI-1765282">
        <id>Q9MAM1</id>
        <label>CIPK9</label>
    </interactant>
    <organismsDiffer>false</organismsDiffer>
    <experiments>4</experiments>
</comment>
<comment type="interaction">
    <interactant intactId="EBI-637381">
        <id>Q9LTB8</id>
    </interactant>
    <interactant intactId="EBI-604555">
        <id>Q84JU4</id>
        <label>IBR5</label>
    </interactant>
    <organismsDiffer>false</organismsDiffer>
    <experiments>4</experiments>
</comment>
<comment type="subcellular location">
    <subcellularLocation>
        <location evidence="6 8 11 13 14">Cell membrane</location>
        <topology evidence="6 8 11 13 14">Lipid-anchor</topology>
    </subcellularLocation>
    <text>Plasma membrane localization abolished by 2-bromopalmitate (2-BP) treatment.</text>
</comment>
<comment type="tissue specificity">
    <text evidence="5 6 8">Ubiquitous. Colocalized with CIPK23 in root tips and vascular bundles in the stem and the leaf, as well as in guard cells and root hairs.</text>
</comment>
<comment type="induction">
    <text evidence="5">By drought, cold, salt and abscisic acid (ABA) treatments.</text>
</comment>
<comment type="domain">
    <text evidence="11">The N-terminal 12 amino acids are sufficient for cell membrane targeting.</text>
</comment>
<comment type="PTM">
    <text evidence="1">Both N-myristoylation and calcium-mediated conformational changes are essential for its function.</text>
</comment>
<comment type="disruption phenotype">
    <text evidence="5">Hypersensitivity to abscisic acid in the early developmental stages.</text>
</comment>
<comment type="similarity">
    <text evidence="16">Belongs to the calcineurin regulatory subunit family.</text>
</comment>
<keyword id="KW-0938">Abscisic acid signaling pathway</keyword>
<keyword id="KW-0106">Calcium</keyword>
<keyword id="KW-1003">Cell membrane</keyword>
<keyword id="KW-0449">Lipoprotein</keyword>
<keyword id="KW-0472">Membrane</keyword>
<keyword id="KW-0479">Metal-binding</keyword>
<keyword id="KW-0519">Myristate</keyword>
<keyword id="KW-0597">Phosphoprotein</keyword>
<keyword id="KW-1185">Reference proteome</keyword>
<keyword id="KW-0677">Repeat</keyword>
<keyword id="KW-0346">Stress response</keyword>
<feature type="initiator methionine" description="Removed" evidence="2">
    <location>
        <position position="1"/>
    </location>
</feature>
<feature type="chain" id="PRO_0000073510" description="Calcineurin B-like protein 9">
    <location>
        <begin position="2"/>
        <end position="213"/>
    </location>
</feature>
<feature type="domain" description="EF-hand 1" evidence="16">
    <location>
        <begin position="31"/>
        <end position="66"/>
    </location>
</feature>
<feature type="domain" description="EF-hand 2" evidence="3">
    <location>
        <begin position="67"/>
        <end position="102"/>
    </location>
</feature>
<feature type="domain" description="EF-hand 3" evidence="3">
    <location>
        <begin position="104"/>
        <end position="139"/>
    </location>
</feature>
<feature type="domain" description="EF-hand 4" evidence="3">
    <location>
        <begin position="148"/>
        <end position="183"/>
    </location>
</feature>
<feature type="binding site" evidence="3">
    <location>
        <position position="117"/>
    </location>
    <ligand>
        <name>Ca(2+)</name>
        <dbReference type="ChEBI" id="CHEBI:29108"/>
        <label>1</label>
    </ligand>
</feature>
<feature type="binding site" evidence="3">
    <location>
        <position position="119"/>
    </location>
    <ligand>
        <name>Ca(2+)</name>
        <dbReference type="ChEBI" id="CHEBI:29108"/>
        <label>1</label>
    </ligand>
</feature>
<feature type="binding site" evidence="3">
    <location>
        <position position="121"/>
    </location>
    <ligand>
        <name>Ca(2+)</name>
        <dbReference type="ChEBI" id="CHEBI:29108"/>
        <label>1</label>
    </ligand>
</feature>
<feature type="binding site" evidence="3">
    <location>
        <position position="128"/>
    </location>
    <ligand>
        <name>Ca(2+)</name>
        <dbReference type="ChEBI" id="CHEBI:29108"/>
        <label>1</label>
    </ligand>
</feature>
<feature type="binding site" evidence="3">
    <location>
        <position position="161"/>
    </location>
    <ligand>
        <name>Ca(2+)</name>
        <dbReference type="ChEBI" id="CHEBI:29108"/>
        <label>2</label>
    </ligand>
</feature>
<feature type="binding site" evidence="3">
    <location>
        <position position="163"/>
    </location>
    <ligand>
        <name>Ca(2+)</name>
        <dbReference type="ChEBI" id="CHEBI:29108"/>
        <label>2</label>
    </ligand>
</feature>
<feature type="binding site" evidence="3">
    <location>
        <position position="165"/>
    </location>
    <ligand>
        <name>Ca(2+)</name>
        <dbReference type="ChEBI" id="CHEBI:29108"/>
        <label>2</label>
    </ligand>
</feature>
<feature type="binding site" evidence="3">
    <location>
        <position position="167"/>
    </location>
    <ligand>
        <name>Ca(2+)</name>
        <dbReference type="ChEBI" id="CHEBI:29108"/>
        <label>2</label>
    </ligand>
</feature>
<feature type="binding site" evidence="3">
    <location>
        <position position="172"/>
    </location>
    <ligand>
        <name>Ca(2+)</name>
        <dbReference type="ChEBI" id="CHEBI:29108"/>
        <label>2</label>
    </ligand>
</feature>
<feature type="site" description="Involved in dimerization" evidence="1">
    <location>
        <position position="140"/>
    </location>
</feature>
<feature type="modified residue" description="Phosphoserine; by CIPK23" evidence="12">
    <location>
        <position position="201"/>
    </location>
</feature>
<feature type="lipid moiety-binding region" description="N-myristoyl glycine" evidence="9">
    <location>
        <position position="2"/>
    </location>
</feature>
<feature type="mutagenesis site" description="Loss of phosphorylation." evidence="12">
    <original>S</original>
    <variation>A</variation>
    <location>
        <position position="201"/>
    </location>
</feature>
<feature type="mutagenesis site" description="Increased interaction with CIPK23." evidence="12">
    <original>S</original>
    <variation>D</variation>
    <location>
        <position position="201"/>
    </location>
</feature>
<name>CNBL9_ARATH</name>
<sequence length="213" mass="24532">MGCFHSTAAREFPDHENPVKLASETAFSVSEVEALYELFKSISSSVVDDGLINKEEFQLALFKNRKKENLFANRIFDLFDVKRKGVIDFGDFVRSLNVFHPNASLEEKTDFTFRLYDMDCTGFIERQEVKQMLIALLCESEMKLADDTIEMILDQTFEDADVDRDGKIDKTEWSNFVIKNPSLLKIMTLPYLRDITTTFPSFVFNSEVDEIAT</sequence>
<gene>
    <name type="primary">CBL9</name>
    <name type="ordered locus">At5g47100</name>
    <name type="ORF">K14A3.5</name>
</gene>
<reference key="1">
    <citation type="submission" date="2001-08" db="EMBL/GenBank/DDBJ databases">
        <title>Molecular characterization of the CBL gene family from Arabidopsis thaliana.</title>
        <authorList>
            <person name="Albrecht V."/>
            <person name="Weinl S."/>
            <person name="Blazevic D."/>
            <person name="Kudla J."/>
        </authorList>
    </citation>
    <scope>NUCLEOTIDE SEQUENCE [MRNA]</scope>
</reference>
<reference key="2">
    <citation type="submission" date="1999-04" db="EMBL/GenBank/DDBJ databases">
        <title>Structural analysis of Arabidopsis thaliana chromosome 5. XI.</title>
        <authorList>
            <person name="Kaneko T."/>
            <person name="Katoh T."/>
            <person name="Asamizu E."/>
            <person name="Sato S."/>
            <person name="Nakamura Y."/>
            <person name="Kotani H."/>
            <person name="Tabata S."/>
        </authorList>
    </citation>
    <scope>NUCLEOTIDE SEQUENCE [LARGE SCALE GENOMIC DNA]</scope>
    <source>
        <strain>cv. Columbia</strain>
    </source>
</reference>
<reference key="3">
    <citation type="journal article" date="2017" name="Plant J.">
        <title>Araport11: a complete reannotation of the Arabidopsis thaliana reference genome.</title>
        <authorList>
            <person name="Cheng C.Y."/>
            <person name="Krishnakumar V."/>
            <person name="Chan A.P."/>
            <person name="Thibaud-Nissen F."/>
            <person name="Schobel S."/>
            <person name="Town C.D."/>
        </authorList>
    </citation>
    <scope>GENOME REANNOTATION</scope>
    <source>
        <strain>cv. Columbia</strain>
    </source>
</reference>
<reference key="4">
    <citation type="journal article" date="2003" name="Science">
        <title>Empirical analysis of transcriptional activity in the Arabidopsis genome.</title>
        <authorList>
            <person name="Yamada K."/>
            <person name="Lim J."/>
            <person name="Dale J.M."/>
            <person name="Chen H."/>
            <person name="Shinn P."/>
            <person name="Palm C.J."/>
            <person name="Southwick A.M."/>
            <person name="Wu H.C."/>
            <person name="Kim C.J."/>
            <person name="Nguyen M."/>
            <person name="Pham P.K."/>
            <person name="Cheuk R.F."/>
            <person name="Karlin-Newmann G."/>
            <person name="Liu S.X."/>
            <person name="Lam B."/>
            <person name="Sakano H."/>
            <person name="Wu T."/>
            <person name="Yu G."/>
            <person name="Miranda M."/>
            <person name="Quach H.L."/>
            <person name="Tripp M."/>
            <person name="Chang C.H."/>
            <person name="Lee J.M."/>
            <person name="Toriumi M.J."/>
            <person name="Chan M.M."/>
            <person name="Tang C.C."/>
            <person name="Onodera C.S."/>
            <person name="Deng J.M."/>
            <person name="Akiyama K."/>
            <person name="Ansari Y."/>
            <person name="Arakawa T."/>
            <person name="Banh J."/>
            <person name="Banno F."/>
            <person name="Bowser L."/>
            <person name="Brooks S.Y."/>
            <person name="Carninci P."/>
            <person name="Chao Q."/>
            <person name="Choy N."/>
            <person name="Enju A."/>
            <person name="Goldsmith A.D."/>
            <person name="Gurjal M."/>
            <person name="Hansen N.F."/>
            <person name="Hayashizaki Y."/>
            <person name="Johnson-Hopson C."/>
            <person name="Hsuan V.W."/>
            <person name="Iida K."/>
            <person name="Karnes M."/>
            <person name="Khan S."/>
            <person name="Koesema E."/>
            <person name="Ishida J."/>
            <person name="Jiang P.X."/>
            <person name="Jones T."/>
            <person name="Kawai J."/>
            <person name="Kamiya A."/>
            <person name="Meyers C."/>
            <person name="Nakajima M."/>
            <person name="Narusaka M."/>
            <person name="Seki M."/>
            <person name="Sakurai T."/>
            <person name="Satou M."/>
            <person name="Tamse R."/>
            <person name="Vaysberg M."/>
            <person name="Wallender E.K."/>
            <person name="Wong C."/>
            <person name="Yamamura Y."/>
            <person name="Yuan S."/>
            <person name="Shinozaki K."/>
            <person name="Davis R.W."/>
            <person name="Theologis A."/>
            <person name="Ecker J.R."/>
        </authorList>
    </citation>
    <scope>NUCLEOTIDE SEQUENCE [LARGE SCALE MRNA]</scope>
    <source>
        <strain>cv. Columbia</strain>
    </source>
</reference>
<reference key="5">
    <citation type="journal article" date="2004" name="Plant Cell">
        <title>The calcium sensor calcineurin B-like 9 modulates abscisic acid sensitivity and biosynthesis in Arabidopsis.</title>
        <authorList>
            <person name="Pandey G.K."/>
            <person name="Cheong Y.H."/>
            <person name="Kim K.-N."/>
            <person name="Grant J.J."/>
            <person name="Li L."/>
            <person name="Hung W."/>
            <person name="D'Angelo C."/>
            <person name="Weinl S."/>
            <person name="Kudla J."/>
            <person name="Luan S."/>
        </authorList>
    </citation>
    <scope>FUNCTION</scope>
    <scope>TISSUE SPECIFICITY</scope>
    <scope>INDUCTION</scope>
    <scope>DISRUPTION PHENOTYPE</scope>
</reference>
<reference key="6">
    <citation type="journal article" date="2004" name="Plant Physiol.">
        <title>Calcium sensors and their interacting protein kinases: genomics of the Arabidopsis and rice CBL-CIPK signaling networks.</title>
        <authorList>
            <person name="Kolukisaoglu U."/>
            <person name="Weinl S."/>
            <person name="Blazevic D."/>
            <person name="Batistic O."/>
            <person name="Kudla J."/>
        </authorList>
    </citation>
    <scope>GENE FAMILY</scope>
    <scope>INTERACTION WITH CIPK1; CIPK8; CIPK18; CIPK21; CIPK23 AND CIPK24</scope>
</reference>
<reference key="7">
    <citation type="journal article" date="2006" name="Cell">
        <title>A protein kinase, interacting with two calcineurin B-like proteins, regulates K+ transporter AKT1 in Arabidopsis.</title>
        <authorList>
            <person name="Xu J."/>
            <person name="Li H.-D."/>
            <person name="Chen L.-Q."/>
            <person name="Wang Y."/>
            <person name="Liu L.-L."/>
            <person name="He L."/>
            <person name="Wu W.-H."/>
        </authorList>
    </citation>
    <scope>FUNCTION</scope>
    <scope>INTERACTION WITH CIPK23</scope>
    <scope>TISSUE SPECIFICITY</scope>
    <scope>SUBCELLULAR LOCATION</scope>
</reference>
<reference key="8">
    <citation type="journal article" date="2007" name="Plant J.">
        <title>Two calcineurin B-like calcium sensors, interacting with protein kinase CIPK23, regulate leaf transpiration and root potassium uptake in Arabidopsis.</title>
        <authorList>
            <person name="Cheong Y.H."/>
            <person name="Pandey G.K."/>
            <person name="Grant J.J."/>
            <person name="Batistic O."/>
            <person name="Li L."/>
            <person name="Kim B.-G."/>
            <person name="Lee S.-C."/>
            <person name="Kudla J."/>
            <person name="Luan S."/>
        </authorList>
    </citation>
    <scope>FUNCTION</scope>
    <scope>INTERACTION WITH CIPK23</scope>
    <scope>TISSUE SPECIFICITY</scope>
    <scope>SUBCELLULAR LOCATION</scope>
</reference>
<reference key="9">
    <citation type="journal article" date="2007" name="Proc. Natl. Acad. Sci. U.S.A.">
        <title>A protein phosphorylation/dephosphorylation network regulates a plant potassium channel.</title>
        <authorList>
            <person name="Lee S.-C."/>
            <person name="Lan W.-Z."/>
            <person name="Kim B.-G."/>
            <person name="Li L."/>
            <person name="Cheong Y.H."/>
            <person name="Pandey G.K."/>
            <person name="Lu G."/>
            <person name="Buchanan B.B."/>
            <person name="Luan S."/>
        </authorList>
    </citation>
    <scope>FUNCTION</scope>
    <scope>INTERACTION WITH CIPK6; CIPK16 AND CIPK23</scope>
</reference>
<reference key="10">
    <citation type="journal article" date="2008" name="Mol. Plant">
        <title>Calcineurin-B-like protein CBL9 interacts with target kinase CIPK3 in the regulation of ABA response in seed germination.</title>
        <authorList>
            <person name="Pandey G.K."/>
            <person name="Grant J.J."/>
            <person name="Cheong Y.H."/>
            <person name="Kim B.G."/>
            <person name="Li L."/>
            <person name="Luan S."/>
        </authorList>
    </citation>
    <scope>FUNCTION</scope>
    <scope>INTERACTION WITH CIPK3</scope>
</reference>
<reference key="11">
    <citation type="journal article" date="2008" name="Plant Cell">
        <title>Dual fatty acyl modification determines the localization and plasma membrane targeting of CBL/CIPK Ca2+ signaling complexes in Arabidopsis.</title>
        <authorList>
            <person name="Batistic O."/>
            <person name="Sorek N."/>
            <person name="Schueltke S."/>
            <person name="Yalovsky S."/>
            <person name="Kudla J."/>
        </authorList>
    </citation>
    <scope>MYRISTOYLATION AT GLY-2</scope>
</reference>
<reference key="12">
    <citation type="journal article" date="2010" name="Plant J.">
        <title>CBL-mediated targeting of CIPKs facilitates the decoding of calcium signals emanating from distinct cellular stores.</title>
        <authorList>
            <person name="Batistic O."/>
            <person name="Waadt R."/>
            <person name="Steinhorst L."/>
            <person name="Held K."/>
            <person name="Kudla J."/>
        </authorList>
    </citation>
    <scope>SUBCELLULAR LOCATION</scope>
    <scope>DOMAIN</scope>
</reference>
<reference key="13">
    <citation type="journal article" date="2011" name="Plant Physiol.">
        <title>Phosphorylation of SOS3-like calcium-binding proteins by their interacting SOS2-like protein kinases is a common regulatory mechanism in Arabidopsis.</title>
        <authorList>
            <person name="Du W."/>
            <person name="Lin H."/>
            <person name="Chen S."/>
            <person name="Wu Y."/>
            <person name="Zhang J."/>
            <person name="Fuglsang A.T."/>
            <person name="Palmgren M.G."/>
            <person name="Wu W."/>
            <person name="Guo Y."/>
        </authorList>
    </citation>
    <scope>PHOSPHORYLATION AT SER-201</scope>
    <scope>MUTAGENESIS OF SER-201</scope>
    <scope>INTERACTION WITH CIPK23</scope>
</reference>
<reference key="14">
    <citation type="journal article" date="2013" name="Mol. Plant">
        <title>The Calcineurin B-like calcium sensors CBL1 and CBL9 together with their interacting protein kinase CIPK26 regulate the Arabidopsis NADPH oxidase RBOHF.</title>
        <authorList>
            <person name="Drerup M.M."/>
            <person name="Schluecking K."/>
            <person name="Hashimoto K."/>
            <person name="Manishankar P."/>
            <person name="Steinhorst L."/>
            <person name="Kuchitsu K."/>
            <person name="Kudla J."/>
        </authorList>
    </citation>
    <scope>FUNCTION</scope>
    <scope>INTERACTION WITH CIPK26</scope>
    <scope>SUBCELLULAR LOCATION</scope>
</reference>
<reference key="15">
    <citation type="journal article" date="2013" name="Plant Cell">
        <title>Protein S-acyl transferase10 is critical for development and salt tolerance in Arabidopsis.</title>
        <authorList>
            <person name="Zhou L.Z."/>
            <person name="Li S."/>
            <person name="Feng Q.N."/>
            <person name="Zhang Y.L."/>
            <person name="Zhao X."/>
            <person name="Zeng Y.L."/>
            <person name="Wang H."/>
            <person name="Jiang L."/>
            <person name="Zhang Y."/>
        </authorList>
    </citation>
    <scope>SUBCELLULAR LOCATION</scope>
    <scope>PALMITOYLATION</scope>
</reference>
<reference key="16">
    <citation type="journal article" date="2014" name="Biochem. Biophys. Res. Commun.">
        <title>Arabidopsis CIPK14 positively regulates glucose response.</title>
        <authorList>
            <person name="Yan J."/>
            <person name="Niu F."/>
            <person name="Liu W.Z."/>
            <person name="Zhang H."/>
            <person name="Wang B."/>
            <person name="Lan W."/>
            <person name="Che Y."/>
            <person name="Yang B."/>
            <person name="Luan S."/>
            <person name="Jiang Y.Q."/>
        </authorList>
    </citation>
    <scope>INTERACTION WITH CIPK14</scope>
</reference>
<dbReference type="EMBL" id="AF411958">
    <property type="protein sequence ID" value="AAL10301.1"/>
    <property type="molecule type" value="mRNA"/>
</dbReference>
<dbReference type="EMBL" id="AB025609">
    <property type="protein sequence ID" value="BAA98105.1"/>
    <property type="molecule type" value="Genomic_DNA"/>
</dbReference>
<dbReference type="EMBL" id="CP002688">
    <property type="protein sequence ID" value="AED95471.1"/>
    <property type="molecule type" value="Genomic_DNA"/>
</dbReference>
<dbReference type="EMBL" id="AB060590">
    <property type="protein sequence ID" value="BAB69895.1"/>
    <property type="molecule type" value="mRNA"/>
</dbReference>
<dbReference type="EMBL" id="BT002995">
    <property type="protein sequence ID" value="AAO22803.1"/>
    <property type="molecule type" value="mRNA"/>
</dbReference>
<dbReference type="EMBL" id="BT004458">
    <property type="protein sequence ID" value="AAO42452.1"/>
    <property type="molecule type" value="mRNA"/>
</dbReference>
<dbReference type="RefSeq" id="NP_199521.1">
    <property type="nucleotide sequence ID" value="NM_124081.4"/>
</dbReference>
<dbReference type="SMR" id="Q9LTB8"/>
<dbReference type="BioGRID" id="20004">
    <property type="interactions" value="20"/>
</dbReference>
<dbReference type="DIP" id="DIP-33308N"/>
<dbReference type="FunCoup" id="Q9LTB8">
    <property type="interactions" value="1024"/>
</dbReference>
<dbReference type="IntAct" id="Q9LTB8">
    <property type="interactions" value="23"/>
</dbReference>
<dbReference type="STRING" id="3702.Q9LTB8"/>
<dbReference type="iPTMnet" id="Q9LTB8"/>
<dbReference type="SwissPalm" id="Q9LTB8"/>
<dbReference type="PaxDb" id="3702-AT5G47100.1"/>
<dbReference type="ProteomicsDB" id="220535"/>
<dbReference type="EnsemblPlants" id="AT5G47100.1">
    <property type="protein sequence ID" value="AT5G47100.1"/>
    <property type="gene ID" value="AT5G47100"/>
</dbReference>
<dbReference type="GeneID" id="834756"/>
<dbReference type="Gramene" id="AT5G47100.1">
    <property type="protein sequence ID" value="AT5G47100.1"/>
    <property type="gene ID" value="AT5G47100"/>
</dbReference>
<dbReference type="KEGG" id="ath:AT5G47100"/>
<dbReference type="Araport" id="AT5G47100"/>
<dbReference type="TAIR" id="AT5G47100">
    <property type="gene designation" value="CBL9"/>
</dbReference>
<dbReference type="eggNOG" id="KOG0034">
    <property type="taxonomic scope" value="Eukaryota"/>
</dbReference>
<dbReference type="HOGENOM" id="CLU_061288_21_0_1"/>
<dbReference type="InParanoid" id="Q9LTB8"/>
<dbReference type="OMA" id="TFMDADP"/>
<dbReference type="OrthoDB" id="191686at2759"/>
<dbReference type="PhylomeDB" id="Q9LTB8"/>
<dbReference type="PRO" id="PR:Q9LTB8"/>
<dbReference type="Proteomes" id="UP000006548">
    <property type="component" value="Chromosome 5"/>
</dbReference>
<dbReference type="ExpressionAtlas" id="Q9LTB8">
    <property type="expression patterns" value="baseline and differential"/>
</dbReference>
<dbReference type="GO" id="GO:0005737">
    <property type="term" value="C:cytoplasm"/>
    <property type="evidence" value="ECO:0000314"/>
    <property type="project" value="TAIR"/>
</dbReference>
<dbReference type="GO" id="GO:0005886">
    <property type="term" value="C:plasma membrane"/>
    <property type="evidence" value="ECO:0000314"/>
    <property type="project" value="TAIR"/>
</dbReference>
<dbReference type="GO" id="GO:0009536">
    <property type="term" value="C:plastid"/>
    <property type="evidence" value="ECO:0007005"/>
    <property type="project" value="TAIR"/>
</dbReference>
<dbReference type="GO" id="GO:0005509">
    <property type="term" value="F:calcium ion binding"/>
    <property type="evidence" value="ECO:0000250"/>
    <property type="project" value="TAIR"/>
</dbReference>
<dbReference type="GO" id="GO:0019900">
    <property type="term" value="F:kinase binding"/>
    <property type="evidence" value="ECO:0000353"/>
    <property type="project" value="UniProtKB"/>
</dbReference>
<dbReference type="GO" id="GO:0009738">
    <property type="term" value="P:abscisic acid-activated signaling pathway"/>
    <property type="evidence" value="ECO:0007669"/>
    <property type="project" value="UniProtKB-KW"/>
</dbReference>
<dbReference type="GO" id="GO:0019722">
    <property type="term" value="P:calcium-mediated signaling"/>
    <property type="evidence" value="ECO:0007669"/>
    <property type="project" value="InterPro"/>
</dbReference>
<dbReference type="GO" id="GO:0009860">
    <property type="term" value="P:pollen tube growth"/>
    <property type="evidence" value="ECO:0000315"/>
    <property type="project" value="TAIR"/>
</dbReference>
<dbReference type="GO" id="GO:0009414">
    <property type="term" value="P:response to water deprivation"/>
    <property type="evidence" value="ECO:0000315"/>
    <property type="project" value="TAIR"/>
</dbReference>
<dbReference type="CDD" id="cd00051">
    <property type="entry name" value="EFh"/>
    <property type="match status" value="1"/>
</dbReference>
<dbReference type="FunFam" id="1.10.238.10:FF:000073">
    <property type="entry name" value="calcineurin B-like protein 3"/>
    <property type="match status" value="1"/>
</dbReference>
<dbReference type="Gene3D" id="1.10.238.10">
    <property type="entry name" value="EF-hand"/>
    <property type="match status" value="1"/>
</dbReference>
<dbReference type="InterPro" id="IPR045198">
    <property type="entry name" value="CNBL1-10"/>
</dbReference>
<dbReference type="InterPro" id="IPR011992">
    <property type="entry name" value="EF-hand-dom_pair"/>
</dbReference>
<dbReference type="InterPro" id="IPR018247">
    <property type="entry name" value="EF_Hand_1_Ca_BS"/>
</dbReference>
<dbReference type="InterPro" id="IPR002048">
    <property type="entry name" value="EF_hand_dom"/>
</dbReference>
<dbReference type="PANTHER" id="PTHR23056">
    <property type="entry name" value="CALCINEURIN B"/>
    <property type="match status" value="1"/>
</dbReference>
<dbReference type="PANTHER" id="PTHR23056:SF96">
    <property type="entry name" value="CALCINEURIN B-LIKE PROTEIN 9"/>
    <property type="match status" value="1"/>
</dbReference>
<dbReference type="Pfam" id="PF13499">
    <property type="entry name" value="EF-hand_7"/>
    <property type="match status" value="1"/>
</dbReference>
<dbReference type="PRINTS" id="PR00450">
    <property type="entry name" value="RECOVERIN"/>
</dbReference>
<dbReference type="SMART" id="SM00054">
    <property type="entry name" value="EFh"/>
    <property type="match status" value="3"/>
</dbReference>
<dbReference type="SUPFAM" id="SSF47473">
    <property type="entry name" value="EF-hand"/>
    <property type="match status" value="1"/>
</dbReference>
<dbReference type="PROSITE" id="PS00018">
    <property type="entry name" value="EF_HAND_1"/>
    <property type="match status" value="2"/>
</dbReference>
<dbReference type="PROSITE" id="PS50222">
    <property type="entry name" value="EF_HAND_2"/>
    <property type="match status" value="3"/>
</dbReference>
<organism>
    <name type="scientific">Arabidopsis thaliana</name>
    <name type="common">Mouse-ear cress</name>
    <dbReference type="NCBI Taxonomy" id="3702"/>
    <lineage>
        <taxon>Eukaryota</taxon>
        <taxon>Viridiplantae</taxon>
        <taxon>Streptophyta</taxon>
        <taxon>Embryophyta</taxon>
        <taxon>Tracheophyta</taxon>
        <taxon>Spermatophyta</taxon>
        <taxon>Magnoliopsida</taxon>
        <taxon>eudicotyledons</taxon>
        <taxon>Gunneridae</taxon>
        <taxon>Pentapetalae</taxon>
        <taxon>rosids</taxon>
        <taxon>malvids</taxon>
        <taxon>Brassicales</taxon>
        <taxon>Brassicaceae</taxon>
        <taxon>Camelineae</taxon>
        <taxon>Arabidopsis</taxon>
    </lineage>
</organism>
<accession>Q9LTB8</accession>
<proteinExistence type="evidence at protein level"/>